<name>AN_EBVG</name>
<protein>
    <recommendedName>
        <fullName evidence="1">Shutoff alkaline exonuclease</fullName>
        <shortName evidence="1">SOX</shortName>
        <ecNumber evidence="1">3.1.-.-</ecNumber>
    </recommendedName>
</protein>
<evidence type="ECO:0000255" key="1">
    <source>
        <dbReference type="HAMAP-Rule" id="MF_04009"/>
    </source>
</evidence>
<organism>
    <name type="scientific">Epstein-Barr virus (strain GD1)</name>
    <name type="common">HHV-4</name>
    <name type="synonym">Human gammaherpesvirus 4</name>
    <dbReference type="NCBI Taxonomy" id="10376"/>
    <lineage>
        <taxon>Viruses</taxon>
        <taxon>Duplodnaviria</taxon>
        <taxon>Heunggongvirae</taxon>
        <taxon>Peploviricota</taxon>
        <taxon>Herviviricetes</taxon>
        <taxon>Herpesvirales</taxon>
        <taxon>Orthoherpesviridae</taxon>
        <taxon>Gammaherpesvirinae</taxon>
        <taxon>Lymphocryptovirus</taxon>
        <taxon>Lymphocryptovirus humangamma4</taxon>
    </lineage>
</organism>
<sequence length="470" mass="52683">MADVDELEDPMEEMTSYTFARFLRSPETEAFVRNLDRPPQMPAMRYVYLYCLCKQIQEFSGETGFCDFVSSLVQENDSQDGPSLKSIYWGLQEATDEQRTVLCSYVESMTRGQSENLMWDILRNGIISSSKLLSTIKNGPTKVFEPAPISTNHYFGGPVAFGLRCEDTVKDIVCKLICGDASANRQFGFMISPTDGIFGVSLDLCVNVESQGDFILFTDRSCIYEIKCRFKYLFSKSEFDPIYPSYTALYKRPCKRSFIRFINSIARPTVEYVPDGRLPSEGDYLLTQDEAWNLKDVRKRKLGPGHDLVADSLAANRGVESMLYVMTDPSENAGRIGIKDRVPVNIFINPRHNYFYQVLLQYKIVGDYVRHSGGGKPGRDCSPRVNIVTAFFRKRSPLDPATCTLGSDLLLDASVEIPVAVLVTPVVLPDSVIRKTLSTAAGSWKAYADNTFDTAPWVPSGLFADDESTP</sequence>
<dbReference type="EC" id="3.1.-.-" evidence="1"/>
<dbReference type="EMBL" id="AY961628">
    <property type="protein sequence ID" value="AAY41134.1"/>
    <property type="molecule type" value="Genomic_DNA"/>
</dbReference>
<dbReference type="SMR" id="Q3KSR5"/>
<dbReference type="IntAct" id="Q3KSR5">
    <property type="interactions" value="6"/>
</dbReference>
<dbReference type="MINT" id="Q3KSR5"/>
<dbReference type="Proteomes" id="UP000007641">
    <property type="component" value="Genome"/>
</dbReference>
<dbReference type="GO" id="GO:0030430">
    <property type="term" value="C:host cell cytoplasm"/>
    <property type="evidence" value="ECO:0007669"/>
    <property type="project" value="UniProtKB-SubCell"/>
</dbReference>
<dbReference type="GO" id="GO:0042025">
    <property type="term" value="C:host cell nucleus"/>
    <property type="evidence" value="ECO:0007669"/>
    <property type="project" value="UniProtKB-SubCell"/>
</dbReference>
<dbReference type="GO" id="GO:0003677">
    <property type="term" value="F:DNA binding"/>
    <property type="evidence" value="ECO:0007669"/>
    <property type="project" value="InterPro"/>
</dbReference>
<dbReference type="GO" id="GO:0004519">
    <property type="term" value="F:endonuclease activity"/>
    <property type="evidence" value="ECO:0007669"/>
    <property type="project" value="UniProtKB-KW"/>
</dbReference>
<dbReference type="GO" id="GO:0004527">
    <property type="term" value="F:exonuclease activity"/>
    <property type="evidence" value="ECO:0007669"/>
    <property type="project" value="UniProtKB-KW"/>
</dbReference>
<dbReference type="GO" id="GO:0003723">
    <property type="term" value="F:RNA binding"/>
    <property type="evidence" value="ECO:0007669"/>
    <property type="project" value="UniProtKB-KW"/>
</dbReference>
<dbReference type="GO" id="GO:0039595">
    <property type="term" value="P:symbiont-mediated degradation of host mRNA"/>
    <property type="evidence" value="ECO:0007669"/>
    <property type="project" value="UniProtKB-KW"/>
</dbReference>
<dbReference type="GO" id="GO:0039657">
    <property type="term" value="P:symbiont-mediated suppression of host gene expression"/>
    <property type="evidence" value="ECO:0007669"/>
    <property type="project" value="UniProtKB-KW"/>
</dbReference>
<dbReference type="Gene3D" id="1.20.120.860">
    <property type="entry name" value="Herpesvirus alkaline exonuclease, N-terminal domain"/>
    <property type="match status" value="1"/>
</dbReference>
<dbReference type="HAMAP" id="MF_04009">
    <property type="entry name" value="HSV_AN"/>
    <property type="match status" value="1"/>
</dbReference>
<dbReference type="InterPro" id="IPR001616">
    <property type="entry name" value="Herpes_alk_exo"/>
</dbReference>
<dbReference type="InterPro" id="IPR011335">
    <property type="entry name" value="Restrct_endonuc-II-like"/>
</dbReference>
<dbReference type="InterPro" id="IPR034720">
    <property type="entry name" value="Viral_alk_exo"/>
</dbReference>
<dbReference type="Pfam" id="PF01771">
    <property type="entry name" value="Viral_alk_exo"/>
    <property type="match status" value="1"/>
</dbReference>
<dbReference type="PRINTS" id="PR00924">
    <property type="entry name" value="ALKEXNUCLASE"/>
</dbReference>
<dbReference type="SUPFAM" id="SSF52980">
    <property type="entry name" value="Restriction endonuclease-like"/>
    <property type="match status" value="1"/>
</dbReference>
<feature type="chain" id="PRO_0000375943" description="Shutoff alkaline exonuclease">
    <location>
        <begin position="1"/>
        <end position="470"/>
    </location>
</feature>
<feature type="site" description="Required for function" evidence="1">
    <location>
        <position position="166"/>
    </location>
</feature>
<feature type="site" description="Required for function" evidence="1">
    <location>
        <position position="203"/>
    </location>
</feature>
<feature type="site" description="Required for function" evidence="1">
    <location>
        <position position="225"/>
    </location>
</feature>
<feature type="site" description="Required for function" evidence="1">
    <location>
        <position position="227"/>
    </location>
</feature>
<organismHost>
    <name type="scientific">Homo sapiens</name>
    <name type="common">Human</name>
    <dbReference type="NCBI Taxonomy" id="9606"/>
</organismHost>
<keyword id="KW-1132">Decay of host mRNAs by virus</keyword>
<keyword id="KW-0244">Early protein</keyword>
<keyword id="KW-0255">Endonuclease</keyword>
<keyword id="KW-1262">Eukaryotic host gene expression shutoff by virus</keyword>
<keyword id="KW-0269">Exonuclease</keyword>
<keyword id="KW-1035">Host cytoplasm</keyword>
<keyword id="KW-1190">Host gene expression shutoff by virus</keyword>
<keyword id="KW-1192">Host mRNA suppression by virus</keyword>
<keyword id="KW-1048">Host nucleus</keyword>
<keyword id="KW-0945">Host-virus interaction</keyword>
<keyword id="KW-0378">Hydrolase</keyword>
<keyword id="KW-0540">Nuclease</keyword>
<keyword id="KW-0694">RNA-binding</keyword>
<accession>Q3KSR5</accession>
<reference key="1">
    <citation type="journal article" date="2005" name="J. Virol.">
        <title>Genomic sequence analysis of Epstein-Barr virus strain GD1 from a nasopharyngeal carcinoma patient.</title>
        <authorList>
            <person name="Zeng M.-S."/>
            <person name="Li D.-J."/>
            <person name="Liu Q.-L."/>
            <person name="Song L.-B."/>
            <person name="Li M.-Z."/>
            <person name="Zhang R.-H."/>
            <person name="Yu X.-J."/>
            <person name="Wang H.-M."/>
            <person name="Ernberg I."/>
            <person name="Zeng Y.-X."/>
        </authorList>
    </citation>
    <scope>NUCLEOTIDE SEQUENCE [LARGE SCALE GENOMIC DNA]</scope>
</reference>
<proteinExistence type="inferred from homology"/>
<gene>
    <name type="ORF">BGLF5</name>
</gene>
<comment type="function">
    <text evidence="1">Plays a role in processing non linear or branched viral DNA intermediates in order to promote the production of mature packaged unit-length linear progeny viral DNA molecules. Exhibits endonuclease and exonuclease activities and accepts both double-stranded and single-stranded DNA as substrate. Exonuclease digestion of DNA is in the 5'-&gt; 3' direction and the products are 5'-monophosphate nucleosides. Additionally, forms a recombinase with the major DNA-binding protein, which displays strand exchange activity. Also acts as a cytoplasmic RNA endonuclease that induces degradation of the majority of the cellular messenger RNAs during early lytic infection. The resulting inhibition of cellular protein synthesis serves to ensure maximal viral gene expression and evasion from host immune response. Internally cleaves host mRNAs which are then degraded by the cellular exonuclease XRN1. Bypasses therefore the regulatory steps of deadenylation and decapping normally required for XRN1 activation.</text>
</comment>
<comment type="subunit">
    <text evidence="1">Forms a complex with the DNA polymerase, the DNA polymerase processivity factor, and the major DNA binding protein.</text>
</comment>
<comment type="subcellular location">
    <subcellularLocation>
        <location evidence="1">Host nucleus</location>
    </subcellularLocation>
    <subcellularLocation>
        <location evidence="1">Host cytoplasm</location>
    </subcellularLocation>
</comment>
<comment type="similarity">
    <text evidence="1">Belongs to the herpesviridae alkaline nuclease family.</text>
</comment>